<gene>
    <name evidence="1" type="primary">rhaT</name>
    <name type="ordered locus">SSON_4077</name>
</gene>
<accession>Q3YV70</accession>
<feature type="chain" id="PRO_0000292768" description="L-rhamnose-proton symporter">
    <location>
        <begin position="1"/>
        <end position="344"/>
    </location>
</feature>
<feature type="transmembrane region" description="Helical" evidence="1">
    <location>
        <begin position="4"/>
        <end position="24"/>
    </location>
</feature>
<feature type="transmembrane region" description="Helical" evidence="1">
    <location>
        <begin position="38"/>
        <end position="58"/>
    </location>
</feature>
<feature type="transmembrane region" description="Helical" evidence="1">
    <location>
        <begin position="68"/>
        <end position="88"/>
    </location>
</feature>
<feature type="transmembrane region" description="Helical" evidence="1">
    <location>
        <begin position="101"/>
        <end position="121"/>
    </location>
</feature>
<feature type="transmembrane region" description="Helical" evidence="1">
    <location>
        <begin position="137"/>
        <end position="157"/>
    </location>
</feature>
<feature type="transmembrane region" description="Helical" evidence="1">
    <location>
        <begin position="175"/>
        <end position="195"/>
    </location>
</feature>
<feature type="transmembrane region" description="Helical" evidence="1">
    <location>
        <begin position="214"/>
        <end position="234"/>
    </location>
</feature>
<feature type="transmembrane region" description="Helical" evidence="1">
    <location>
        <begin position="259"/>
        <end position="279"/>
    </location>
</feature>
<feature type="transmembrane region" description="Helical" evidence="1">
    <location>
        <begin position="290"/>
        <end position="310"/>
    </location>
</feature>
<feature type="transmembrane region" description="Helical" evidence="1">
    <location>
        <begin position="323"/>
        <end position="343"/>
    </location>
</feature>
<proteinExistence type="inferred from homology"/>
<evidence type="ECO:0000255" key="1">
    <source>
        <dbReference type="HAMAP-Rule" id="MF_01532"/>
    </source>
</evidence>
<dbReference type="EMBL" id="CP000038">
    <property type="protein sequence ID" value="AAZ90592.1"/>
    <property type="molecule type" value="Genomic_DNA"/>
</dbReference>
<dbReference type="RefSeq" id="WP_000063531.1">
    <property type="nucleotide sequence ID" value="NC_007384.1"/>
</dbReference>
<dbReference type="GeneID" id="93778031"/>
<dbReference type="KEGG" id="ssn:SSON_4077"/>
<dbReference type="HOGENOM" id="CLU_066437_0_0_6"/>
<dbReference type="Proteomes" id="UP000002529">
    <property type="component" value="Chromosome"/>
</dbReference>
<dbReference type="GO" id="GO:0005886">
    <property type="term" value="C:plasma membrane"/>
    <property type="evidence" value="ECO:0007669"/>
    <property type="project" value="UniProtKB-SubCell"/>
</dbReference>
<dbReference type="GO" id="GO:0015153">
    <property type="term" value="F:rhamnose transmembrane transporter activity"/>
    <property type="evidence" value="ECO:0007669"/>
    <property type="project" value="UniProtKB-UniRule"/>
</dbReference>
<dbReference type="GO" id="GO:0015293">
    <property type="term" value="F:symporter activity"/>
    <property type="evidence" value="ECO:0007669"/>
    <property type="project" value="UniProtKB-KW"/>
</dbReference>
<dbReference type="HAMAP" id="MF_01532">
    <property type="entry name" value="RhaT"/>
    <property type="match status" value="1"/>
</dbReference>
<dbReference type="InterPro" id="IPR004673">
    <property type="entry name" value="L-rhamnose-proton_sym_RhaT"/>
</dbReference>
<dbReference type="NCBIfam" id="NF010021">
    <property type="entry name" value="PRK13499.1-1"/>
    <property type="match status" value="1"/>
</dbReference>
<dbReference type="NCBIfam" id="NF010023">
    <property type="entry name" value="PRK13499.1-3"/>
    <property type="match status" value="1"/>
</dbReference>
<dbReference type="NCBIfam" id="TIGR00776">
    <property type="entry name" value="RhaT"/>
    <property type="match status" value="1"/>
</dbReference>
<dbReference type="Pfam" id="PF06379">
    <property type="entry name" value="RhaT"/>
    <property type="match status" value="1"/>
</dbReference>
<reference key="1">
    <citation type="journal article" date="2005" name="Nucleic Acids Res.">
        <title>Genome dynamics and diversity of Shigella species, the etiologic agents of bacillary dysentery.</title>
        <authorList>
            <person name="Yang F."/>
            <person name="Yang J."/>
            <person name="Zhang X."/>
            <person name="Chen L."/>
            <person name="Jiang Y."/>
            <person name="Yan Y."/>
            <person name="Tang X."/>
            <person name="Wang J."/>
            <person name="Xiong Z."/>
            <person name="Dong J."/>
            <person name="Xue Y."/>
            <person name="Zhu Y."/>
            <person name="Xu X."/>
            <person name="Sun L."/>
            <person name="Chen S."/>
            <person name="Nie H."/>
            <person name="Peng J."/>
            <person name="Xu J."/>
            <person name="Wang Y."/>
            <person name="Yuan Z."/>
            <person name="Wen Y."/>
            <person name="Yao Z."/>
            <person name="Shen Y."/>
            <person name="Qiang B."/>
            <person name="Hou Y."/>
            <person name="Yu J."/>
            <person name="Jin Q."/>
        </authorList>
    </citation>
    <scope>NUCLEOTIDE SEQUENCE [LARGE SCALE GENOMIC DNA]</scope>
    <source>
        <strain>Ss046</strain>
    </source>
</reference>
<sequence>MSNAITMGIFWHLIGAASAACFYAPFKKVKKWSWETMWSVGGIVSWIILPWTISALLLPDFWAYYSSFSLSTLLPVFLFGAMWGIGNINYGLTMRYLGMSMGIGIAIGITLIVGTLMTPIINGNFDVLINTEGGRMTLLGVLVALIGVGIVTRAGQLKERKMGIKAEEFNLKKGLVLAVMCGIFSAGMSFAMNAAKPMHEAAAALGVDPLYVALPSYVVIMGGGAIINLGFCFIRLAKVKDLSLKADFSLAKPLIIHNVLLSALGGLMWYLQFFFYAWGHARIPAQYDYISWMLHMSFYVLCGGIVGLVLKEWNNTGRRPVTVLSLGCVVIIVAANIVGIGMAN</sequence>
<name>RHAT_SHISS</name>
<comment type="function">
    <text evidence="1">Uptake of L-rhamnose across the cytoplasmic membrane with the concomitant transport of protons into the cell (symport system).</text>
</comment>
<comment type="catalytic activity">
    <reaction evidence="1">
        <text>L-rhamnopyranose(in) + H(+)(in) = L-rhamnopyranose(out) + H(+)(out)</text>
        <dbReference type="Rhea" id="RHEA:29947"/>
        <dbReference type="ChEBI" id="CHEBI:15378"/>
        <dbReference type="ChEBI" id="CHEBI:62346"/>
    </reaction>
    <physiologicalReaction direction="right-to-left" evidence="1">
        <dbReference type="Rhea" id="RHEA:29949"/>
    </physiologicalReaction>
</comment>
<comment type="subcellular location">
    <subcellularLocation>
        <location evidence="1">Cell inner membrane</location>
        <topology evidence="1">Multi-pass membrane protein</topology>
    </subcellularLocation>
</comment>
<comment type="similarity">
    <text evidence="1">Belongs to the L-rhamnose transporter (TC 2.A.7.6) family.</text>
</comment>
<protein>
    <recommendedName>
        <fullName evidence="1">L-rhamnose-proton symporter</fullName>
    </recommendedName>
    <alternativeName>
        <fullName evidence="1">L-rhamnose-H(+) transport protein</fullName>
    </alternativeName>
</protein>
<organism>
    <name type="scientific">Shigella sonnei (strain Ss046)</name>
    <dbReference type="NCBI Taxonomy" id="300269"/>
    <lineage>
        <taxon>Bacteria</taxon>
        <taxon>Pseudomonadati</taxon>
        <taxon>Pseudomonadota</taxon>
        <taxon>Gammaproteobacteria</taxon>
        <taxon>Enterobacterales</taxon>
        <taxon>Enterobacteriaceae</taxon>
        <taxon>Shigella</taxon>
    </lineage>
</organism>
<keyword id="KW-0997">Cell inner membrane</keyword>
<keyword id="KW-1003">Cell membrane</keyword>
<keyword id="KW-0472">Membrane</keyword>
<keyword id="KW-1185">Reference proteome</keyword>
<keyword id="KW-0762">Sugar transport</keyword>
<keyword id="KW-0769">Symport</keyword>
<keyword id="KW-0812">Transmembrane</keyword>
<keyword id="KW-1133">Transmembrane helix</keyword>
<keyword id="KW-0813">Transport</keyword>